<sequence>MQINLEKYIRTVEDFPKKGISFKDISPLLADGKALNYTIVEMASLAKDVDIIVGPDARGFLFGTPTAAFLSKPFIMIRKAGKLPGEVEEFAYELEYGSAILEVQVDMIKPGQKVAIIDDVLATGGTVKAITKMIERAGAIVDKIIFLIELEQLQGRKKLENYDVISLIKIS</sequence>
<reference key="1">
    <citation type="journal article" date="2004" name="J. Bacteriol.">
        <title>The genome sequence of Mycoplasma hyopneumoniae strain 232, the agent of swine mycoplasmosis.</title>
        <authorList>
            <person name="Minion F.C."/>
            <person name="Lefkowitz E.J."/>
            <person name="Madsen M.L."/>
            <person name="Cleary B.J."/>
            <person name="Swartzell S.M."/>
            <person name="Mahairas G.G."/>
        </authorList>
    </citation>
    <scope>NUCLEOTIDE SEQUENCE [LARGE SCALE GENOMIC DNA]</scope>
    <source>
        <strain>232</strain>
    </source>
</reference>
<comment type="function">
    <text evidence="1">Catalyzes a salvage reaction resulting in the formation of AMP, that is energically less costly than de novo synthesis.</text>
</comment>
<comment type="catalytic activity">
    <reaction evidence="1">
        <text>AMP + diphosphate = 5-phospho-alpha-D-ribose 1-diphosphate + adenine</text>
        <dbReference type="Rhea" id="RHEA:16609"/>
        <dbReference type="ChEBI" id="CHEBI:16708"/>
        <dbReference type="ChEBI" id="CHEBI:33019"/>
        <dbReference type="ChEBI" id="CHEBI:58017"/>
        <dbReference type="ChEBI" id="CHEBI:456215"/>
        <dbReference type="EC" id="2.4.2.7"/>
    </reaction>
</comment>
<comment type="pathway">
    <text evidence="1">Purine metabolism; AMP biosynthesis via salvage pathway; AMP from adenine: step 1/1.</text>
</comment>
<comment type="subunit">
    <text evidence="1">Homodimer.</text>
</comment>
<comment type="subcellular location">
    <subcellularLocation>
        <location evidence="1">Cytoplasm</location>
    </subcellularLocation>
</comment>
<comment type="similarity">
    <text evidence="1">Belongs to the purine/pyrimidine phosphoribosyltransferase family.</text>
</comment>
<organism>
    <name type="scientific">Mesomycoplasma hyopneumoniae (strain 232)</name>
    <name type="common">Mycoplasma hyopneumoniae</name>
    <dbReference type="NCBI Taxonomy" id="295358"/>
    <lineage>
        <taxon>Bacteria</taxon>
        <taxon>Bacillati</taxon>
        <taxon>Mycoplasmatota</taxon>
        <taxon>Mycoplasmoidales</taxon>
        <taxon>Metamycoplasmataceae</taxon>
        <taxon>Mesomycoplasma</taxon>
    </lineage>
</organism>
<evidence type="ECO:0000255" key="1">
    <source>
        <dbReference type="HAMAP-Rule" id="MF_00004"/>
    </source>
</evidence>
<protein>
    <recommendedName>
        <fullName evidence="1">Adenine phosphoribosyltransferase</fullName>
        <shortName evidence="1">APRT</shortName>
        <ecNumber evidence="1">2.4.2.7</ecNumber>
    </recommendedName>
</protein>
<keyword id="KW-0963">Cytoplasm</keyword>
<keyword id="KW-0328">Glycosyltransferase</keyword>
<keyword id="KW-0660">Purine salvage</keyword>
<keyword id="KW-0808">Transferase</keyword>
<accession>Q601D6</accession>
<gene>
    <name evidence="1" type="primary">apt</name>
    <name type="ordered locus">mhp266</name>
</gene>
<feature type="chain" id="PRO_0000149412" description="Adenine phosphoribosyltransferase">
    <location>
        <begin position="1"/>
        <end position="171"/>
    </location>
</feature>
<name>APT_MESH2</name>
<proteinExistence type="inferred from homology"/>
<dbReference type="EC" id="2.4.2.7" evidence="1"/>
<dbReference type="EMBL" id="AE017332">
    <property type="protein sequence ID" value="AAV27798.1"/>
    <property type="molecule type" value="Genomic_DNA"/>
</dbReference>
<dbReference type="RefSeq" id="WP_011206103.1">
    <property type="nucleotide sequence ID" value="NC_006360.1"/>
</dbReference>
<dbReference type="SMR" id="Q601D6"/>
<dbReference type="GeneID" id="41334412"/>
<dbReference type="KEGG" id="mhy:mhp266"/>
<dbReference type="eggNOG" id="COG0503">
    <property type="taxonomic scope" value="Bacteria"/>
</dbReference>
<dbReference type="HOGENOM" id="CLU_063339_3_0_14"/>
<dbReference type="PhylomeDB" id="Q601D6"/>
<dbReference type="UniPathway" id="UPA00588">
    <property type="reaction ID" value="UER00646"/>
</dbReference>
<dbReference type="Proteomes" id="UP000006822">
    <property type="component" value="Chromosome"/>
</dbReference>
<dbReference type="GO" id="GO:0005737">
    <property type="term" value="C:cytoplasm"/>
    <property type="evidence" value="ECO:0007669"/>
    <property type="project" value="UniProtKB-SubCell"/>
</dbReference>
<dbReference type="GO" id="GO:0002055">
    <property type="term" value="F:adenine binding"/>
    <property type="evidence" value="ECO:0007669"/>
    <property type="project" value="TreeGrafter"/>
</dbReference>
<dbReference type="GO" id="GO:0003999">
    <property type="term" value="F:adenine phosphoribosyltransferase activity"/>
    <property type="evidence" value="ECO:0007669"/>
    <property type="project" value="UniProtKB-UniRule"/>
</dbReference>
<dbReference type="GO" id="GO:0016208">
    <property type="term" value="F:AMP binding"/>
    <property type="evidence" value="ECO:0007669"/>
    <property type="project" value="TreeGrafter"/>
</dbReference>
<dbReference type="GO" id="GO:0006168">
    <property type="term" value="P:adenine salvage"/>
    <property type="evidence" value="ECO:0007669"/>
    <property type="project" value="InterPro"/>
</dbReference>
<dbReference type="GO" id="GO:0044209">
    <property type="term" value="P:AMP salvage"/>
    <property type="evidence" value="ECO:0007669"/>
    <property type="project" value="UniProtKB-UniRule"/>
</dbReference>
<dbReference type="GO" id="GO:0006166">
    <property type="term" value="P:purine ribonucleoside salvage"/>
    <property type="evidence" value="ECO:0007669"/>
    <property type="project" value="UniProtKB-KW"/>
</dbReference>
<dbReference type="CDD" id="cd06223">
    <property type="entry name" value="PRTases_typeI"/>
    <property type="match status" value="1"/>
</dbReference>
<dbReference type="FunFam" id="3.40.50.2020:FF:000004">
    <property type="entry name" value="Adenine phosphoribosyltransferase"/>
    <property type="match status" value="1"/>
</dbReference>
<dbReference type="Gene3D" id="3.40.50.2020">
    <property type="match status" value="1"/>
</dbReference>
<dbReference type="HAMAP" id="MF_00004">
    <property type="entry name" value="Aden_phosphoribosyltr"/>
    <property type="match status" value="1"/>
</dbReference>
<dbReference type="InterPro" id="IPR005764">
    <property type="entry name" value="Ade_phspho_trans"/>
</dbReference>
<dbReference type="InterPro" id="IPR000836">
    <property type="entry name" value="PRibTrfase_dom"/>
</dbReference>
<dbReference type="InterPro" id="IPR029057">
    <property type="entry name" value="PRTase-like"/>
</dbReference>
<dbReference type="InterPro" id="IPR050054">
    <property type="entry name" value="UPRTase/APRTase"/>
</dbReference>
<dbReference type="NCBIfam" id="TIGR01090">
    <property type="entry name" value="apt"/>
    <property type="match status" value="1"/>
</dbReference>
<dbReference type="NCBIfam" id="NF002634">
    <property type="entry name" value="PRK02304.1-3"/>
    <property type="match status" value="1"/>
</dbReference>
<dbReference type="NCBIfam" id="NF002636">
    <property type="entry name" value="PRK02304.1-5"/>
    <property type="match status" value="1"/>
</dbReference>
<dbReference type="PANTHER" id="PTHR32315">
    <property type="entry name" value="ADENINE PHOSPHORIBOSYLTRANSFERASE"/>
    <property type="match status" value="1"/>
</dbReference>
<dbReference type="PANTHER" id="PTHR32315:SF3">
    <property type="entry name" value="ADENINE PHOSPHORIBOSYLTRANSFERASE"/>
    <property type="match status" value="1"/>
</dbReference>
<dbReference type="Pfam" id="PF00156">
    <property type="entry name" value="Pribosyltran"/>
    <property type="match status" value="1"/>
</dbReference>
<dbReference type="SUPFAM" id="SSF53271">
    <property type="entry name" value="PRTase-like"/>
    <property type="match status" value="1"/>
</dbReference>